<dbReference type="EC" id="7.1.1.-" evidence="1"/>
<dbReference type="EMBL" id="AE017180">
    <property type="protein sequence ID" value="AAR33674.1"/>
    <property type="molecule type" value="Genomic_DNA"/>
</dbReference>
<dbReference type="RefSeq" id="NP_951401.1">
    <property type="nucleotide sequence ID" value="NC_002939.5"/>
</dbReference>
<dbReference type="RefSeq" id="WP_010941009.1">
    <property type="nucleotide sequence ID" value="NC_002939.5"/>
</dbReference>
<dbReference type="SMR" id="Q74GA5"/>
<dbReference type="STRING" id="243231.GSU0341"/>
<dbReference type="TCDB" id="3.D.1.5.1">
    <property type="family name" value="the h+ or na+-translocating nadh dehydrogenase (ndh) family"/>
</dbReference>
<dbReference type="EnsemblBacteria" id="AAR33674">
    <property type="protein sequence ID" value="AAR33674"/>
    <property type="gene ID" value="GSU0341"/>
</dbReference>
<dbReference type="KEGG" id="gsu:GSU0341"/>
<dbReference type="PATRIC" id="fig|243231.5.peg.338"/>
<dbReference type="eggNOG" id="COG0649">
    <property type="taxonomic scope" value="Bacteria"/>
</dbReference>
<dbReference type="HOGENOM" id="CLU_015134_1_2_7"/>
<dbReference type="InParanoid" id="Q74GA5"/>
<dbReference type="OrthoDB" id="9801496at2"/>
<dbReference type="Proteomes" id="UP000000577">
    <property type="component" value="Chromosome"/>
</dbReference>
<dbReference type="GO" id="GO:0005886">
    <property type="term" value="C:plasma membrane"/>
    <property type="evidence" value="ECO:0007669"/>
    <property type="project" value="UniProtKB-SubCell"/>
</dbReference>
<dbReference type="GO" id="GO:0051287">
    <property type="term" value="F:NAD binding"/>
    <property type="evidence" value="ECO:0007669"/>
    <property type="project" value="InterPro"/>
</dbReference>
<dbReference type="GO" id="GO:0050136">
    <property type="term" value="F:NADH:ubiquinone reductase (non-electrogenic) activity"/>
    <property type="evidence" value="ECO:0007669"/>
    <property type="project" value="UniProtKB-UniRule"/>
</dbReference>
<dbReference type="GO" id="GO:0048038">
    <property type="term" value="F:quinone binding"/>
    <property type="evidence" value="ECO:0007669"/>
    <property type="project" value="UniProtKB-KW"/>
</dbReference>
<dbReference type="FunFam" id="1.10.645.10:FF:000005">
    <property type="entry name" value="NADH-quinone oxidoreductase subunit D"/>
    <property type="match status" value="1"/>
</dbReference>
<dbReference type="Gene3D" id="1.10.645.10">
    <property type="entry name" value="Cytochrome-c3 Hydrogenase, chain B"/>
    <property type="match status" value="1"/>
</dbReference>
<dbReference type="HAMAP" id="MF_01358">
    <property type="entry name" value="NDH1_NuoD"/>
    <property type="match status" value="1"/>
</dbReference>
<dbReference type="InterPro" id="IPR001135">
    <property type="entry name" value="NADH_Q_OxRdtase_suD"/>
</dbReference>
<dbReference type="InterPro" id="IPR014029">
    <property type="entry name" value="NADH_UbQ_OxRdtase_49kDa_CS"/>
</dbReference>
<dbReference type="InterPro" id="IPR022885">
    <property type="entry name" value="NDH1_su_D/H"/>
</dbReference>
<dbReference type="InterPro" id="IPR029014">
    <property type="entry name" value="NiFe-Hase_large"/>
</dbReference>
<dbReference type="NCBIfam" id="TIGR01962">
    <property type="entry name" value="NuoD"/>
    <property type="match status" value="1"/>
</dbReference>
<dbReference type="NCBIfam" id="NF004739">
    <property type="entry name" value="PRK06075.1"/>
    <property type="match status" value="1"/>
</dbReference>
<dbReference type="PANTHER" id="PTHR11993:SF10">
    <property type="entry name" value="NADH DEHYDROGENASE [UBIQUINONE] IRON-SULFUR PROTEIN 2, MITOCHONDRIAL"/>
    <property type="match status" value="1"/>
</dbReference>
<dbReference type="PANTHER" id="PTHR11993">
    <property type="entry name" value="NADH-UBIQUINONE OXIDOREDUCTASE 49 KDA SUBUNIT"/>
    <property type="match status" value="1"/>
</dbReference>
<dbReference type="Pfam" id="PF00346">
    <property type="entry name" value="Complex1_49kDa"/>
    <property type="match status" value="1"/>
</dbReference>
<dbReference type="SUPFAM" id="SSF56762">
    <property type="entry name" value="HydB/Nqo4-like"/>
    <property type="match status" value="1"/>
</dbReference>
<dbReference type="PROSITE" id="PS00535">
    <property type="entry name" value="COMPLEX1_49K"/>
    <property type="match status" value="1"/>
</dbReference>
<accession>Q74GA5</accession>
<proteinExistence type="inferred from homology"/>
<comment type="function">
    <text evidence="1">NDH-1 shuttles electrons from NADH, via FMN and iron-sulfur (Fe-S) centers, to quinones in the respiratory chain. The immediate electron acceptor for the enzyme in this species is believed to be ubiquinone. Couples the redox reaction to proton translocation (for every two electrons transferred, four hydrogen ions are translocated across the cytoplasmic membrane), and thus conserves the redox energy in a proton gradient.</text>
</comment>
<comment type="catalytic activity">
    <reaction evidence="1">
        <text>a quinone + NADH + 5 H(+)(in) = a quinol + NAD(+) + 4 H(+)(out)</text>
        <dbReference type="Rhea" id="RHEA:57888"/>
        <dbReference type="ChEBI" id="CHEBI:15378"/>
        <dbReference type="ChEBI" id="CHEBI:24646"/>
        <dbReference type="ChEBI" id="CHEBI:57540"/>
        <dbReference type="ChEBI" id="CHEBI:57945"/>
        <dbReference type="ChEBI" id="CHEBI:132124"/>
    </reaction>
</comment>
<comment type="subunit">
    <text evidence="1">NDH-1 is composed of 14 different subunits. Subunits NuoB, C, D, E, F, and G constitute the peripheral sector of the complex.</text>
</comment>
<comment type="subcellular location">
    <subcellularLocation>
        <location evidence="1">Cell inner membrane</location>
        <topology evidence="1">Peripheral membrane protein</topology>
        <orientation evidence="1">Cytoplasmic side</orientation>
    </subcellularLocation>
</comment>
<comment type="similarity">
    <text evidence="1">Belongs to the complex I 49 kDa subunit family.</text>
</comment>
<name>NUOD_GEOSL</name>
<keyword id="KW-0997">Cell inner membrane</keyword>
<keyword id="KW-1003">Cell membrane</keyword>
<keyword id="KW-0472">Membrane</keyword>
<keyword id="KW-0520">NAD</keyword>
<keyword id="KW-0874">Quinone</keyword>
<keyword id="KW-1185">Reference proteome</keyword>
<keyword id="KW-1278">Translocase</keyword>
<keyword id="KW-0813">Transport</keyword>
<keyword id="KW-0830">Ubiquinone</keyword>
<reference key="1">
    <citation type="journal article" date="2003" name="Science">
        <title>Genome of Geobacter sulfurreducens: metal reduction in subsurface environments.</title>
        <authorList>
            <person name="Methe B.A."/>
            <person name="Nelson K.E."/>
            <person name="Eisen J.A."/>
            <person name="Paulsen I.T."/>
            <person name="Nelson W.C."/>
            <person name="Heidelberg J.F."/>
            <person name="Wu D."/>
            <person name="Wu M."/>
            <person name="Ward N.L."/>
            <person name="Beanan M.J."/>
            <person name="Dodson R.J."/>
            <person name="Madupu R."/>
            <person name="Brinkac L.M."/>
            <person name="Daugherty S.C."/>
            <person name="DeBoy R.T."/>
            <person name="Durkin A.S."/>
            <person name="Gwinn M.L."/>
            <person name="Kolonay J.F."/>
            <person name="Sullivan S.A."/>
            <person name="Haft D.H."/>
            <person name="Selengut J."/>
            <person name="Davidsen T.M."/>
            <person name="Zafar N."/>
            <person name="White O."/>
            <person name="Tran B."/>
            <person name="Romero C."/>
            <person name="Forberger H.A."/>
            <person name="Weidman J.F."/>
            <person name="Khouri H.M."/>
            <person name="Feldblyum T.V."/>
            <person name="Utterback T.R."/>
            <person name="Van Aken S.E."/>
            <person name="Lovley D.R."/>
            <person name="Fraser C.M."/>
        </authorList>
    </citation>
    <scope>NUCLEOTIDE SEQUENCE [LARGE SCALE GENOMIC DNA]</scope>
    <source>
        <strain>ATCC 51573 / DSM 12127 / PCA</strain>
    </source>
</reference>
<feature type="chain" id="PRO_0000357824" description="NADH-quinone oxidoreductase subunit D">
    <location>
        <begin position="1"/>
        <end position="390"/>
    </location>
</feature>
<protein>
    <recommendedName>
        <fullName evidence="1">NADH-quinone oxidoreductase subunit D</fullName>
        <ecNumber evidence="1">7.1.1.-</ecNumber>
    </recommendedName>
    <alternativeName>
        <fullName evidence="1">NADH dehydrogenase I subunit D</fullName>
    </alternativeName>
    <alternativeName>
        <fullName evidence="1">NDH-1 subunit D</fullName>
    </alternativeName>
</protein>
<evidence type="ECO:0000255" key="1">
    <source>
        <dbReference type="HAMAP-Rule" id="MF_01358"/>
    </source>
</evidence>
<gene>
    <name evidence="1" type="primary">nuoD</name>
    <name type="ordered locus">GSU0341</name>
</gene>
<sequence>MASTEIMTVNMGPQHPSTHGVLRMVIELDGEVIQKITPHIGYLHRGVEKLSEHRTYHQTIPLTDRLDYLAPMSNNLGYVLAVEKLLGIEIPERAQTIRVIMAELTRLKSHLVWIACHALDIGAMTVFIYAFREREMIMSLYEKISGARMTSNYFRVGGLSSDVYDGFEKDVREVIDTFPGHFDTYEGLLTKNTIWVNRTVGNGVISAEDAVDYGITGPALRGSGVDWDLRRDNPYSGYEKYSFKVPVGEKCDTFDRYKVRLIEMREAVNIIRQALDSLKPGPVLADNPQVTYPPKENVYNSIEGLIHHFKIASEGFPVPEGEVYQSVEAPKGELGYYIVSDGGPKPYRMRIRPPSFVNLGAIEKMAKGSMIADLVAVIGTLDIVLGEIDR</sequence>
<organism>
    <name type="scientific">Geobacter sulfurreducens (strain ATCC 51573 / DSM 12127 / PCA)</name>
    <dbReference type="NCBI Taxonomy" id="243231"/>
    <lineage>
        <taxon>Bacteria</taxon>
        <taxon>Pseudomonadati</taxon>
        <taxon>Thermodesulfobacteriota</taxon>
        <taxon>Desulfuromonadia</taxon>
        <taxon>Geobacterales</taxon>
        <taxon>Geobacteraceae</taxon>
        <taxon>Geobacter</taxon>
    </lineage>
</organism>